<feature type="chain" id="PRO_0000180163" description="Acyl carrier protein">
    <location>
        <begin position="1"/>
        <end position="78"/>
    </location>
</feature>
<feature type="domain" description="Carrier" evidence="2">
    <location>
        <begin position="2"/>
        <end position="77"/>
    </location>
</feature>
<feature type="modified residue" description="O-(pantetheine 4'-phosphoryl)serine" evidence="2">
    <location>
        <position position="37"/>
    </location>
</feature>
<sequence>MSNIEDRVRKIIIEQLGVDEAEVKNEASFVDDLGADSLDTVELVMALEEEFDTEIPDEAAEKITTVQAAIDYVNSASE</sequence>
<proteinExistence type="inferred from homology"/>
<name>ACP_PHOPR</name>
<reference key="1">
    <citation type="journal article" date="2005" name="Science">
        <title>Life at depth: Photobacterium profundum genome sequence and expression analysis.</title>
        <authorList>
            <person name="Vezzi A."/>
            <person name="Campanaro S."/>
            <person name="D'Angelo M."/>
            <person name="Simonato F."/>
            <person name="Vitulo N."/>
            <person name="Lauro F.M."/>
            <person name="Cestaro A."/>
            <person name="Malacrida G."/>
            <person name="Simionati B."/>
            <person name="Cannata N."/>
            <person name="Romualdi C."/>
            <person name="Bartlett D.H."/>
            <person name="Valle G."/>
        </authorList>
    </citation>
    <scope>NUCLEOTIDE SEQUENCE [LARGE SCALE GENOMIC DNA]</scope>
    <source>
        <strain>ATCC BAA-1253 / SS9</strain>
    </source>
</reference>
<reference key="2">
    <citation type="journal article" date="2000" name="J. Bacteriol.">
        <title>FabF is required for piezoregulation of cis-vaccenic acid levels and piezophilic growth of the deep-sea bacterium Photobacterium profundum strain SS9.</title>
        <authorList>
            <person name="Allen E.E."/>
            <person name="Bartlett D.H."/>
        </authorList>
    </citation>
    <scope>NUCLEOTIDE SEQUENCE [GENOMIC DNA] OF 34-78</scope>
</reference>
<gene>
    <name evidence="1" type="primary">acpP</name>
    <name type="ordered locus">PBPRA1196</name>
</gene>
<comment type="function">
    <text evidence="1">Carrier of the growing fatty acid chain in fatty acid biosynthesis.</text>
</comment>
<comment type="pathway">
    <text evidence="1">Lipid metabolism; fatty acid biosynthesis.</text>
</comment>
<comment type="subcellular location">
    <subcellularLocation>
        <location evidence="1">Cytoplasm</location>
    </subcellularLocation>
</comment>
<comment type="PTM">
    <text evidence="1">4'-phosphopantetheine is transferred from CoA to a specific serine of apo-ACP by AcpS. This modification is essential for activity because fatty acids are bound in thioester linkage to the sulfhydryl of the prosthetic group.</text>
</comment>
<comment type="similarity">
    <text evidence="1">Belongs to the acyl carrier protein (ACP) family.</text>
</comment>
<protein>
    <recommendedName>
        <fullName evidence="1">Acyl carrier protein</fullName>
        <shortName evidence="1">ACP</shortName>
    </recommendedName>
</protein>
<dbReference type="EMBL" id="CR378666">
    <property type="protein sequence ID" value="CAG19607.1"/>
    <property type="molecule type" value="Genomic_DNA"/>
</dbReference>
<dbReference type="EMBL" id="AF188707">
    <property type="protein sequence ID" value="AAF04117.1"/>
    <property type="molecule type" value="Genomic_DNA"/>
</dbReference>
<dbReference type="RefSeq" id="WP_011217937.1">
    <property type="nucleotide sequence ID" value="NC_006370.1"/>
</dbReference>
<dbReference type="SMR" id="Q9R6Z3"/>
<dbReference type="STRING" id="298386.PBPRA1196"/>
<dbReference type="KEGG" id="ppr:PBPRA1196"/>
<dbReference type="eggNOG" id="COG0236">
    <property type="taxonomic scope" value="Bacteria"/>
</dbReference>
<dbReference type="HOGENOM" id="CLU_108696_5_1_6"/>
<dbReference type="UniPathway" id="UPA00094"/>
<dbReference type="Proteomes" id="UP000000593">
    <property type="component" value="Chromosome 1"/>
</dbReference>
<dbReference type="GO" id="GO:0005829">
    <property type="term" value="C:cytosol"/>
    <property type="evidence" value="ECO:0007669"/>
    <property type="project" value="TreeGrafter"/>
</dbReference>
<dbReference type="GO" id="GO:0016020">
    <property type="term" value="C:membrane"/>
    <property type="evidence" value="ECO:0007669"/>
    <property type="project" value="GOC"/>
</dbReference>
<dbReference type="GO" id="GO:0000035">
    <property type="term" value="F:acyl binding"/>
    <property type="evidence" value="ECO:0007669"/>
    <property type="project" value="TreeGrafter"/>
</dbReference>
<dbReference type="GO" id="GO:0000036">
    <property type="term" value="F:acyl carrier activity"/>
    <property type="evidence" value="ECO:0007669"/>
    <property type="project" value="UniProtKB-UniRule"/>
</dbReference>
<dbReference type="GO" id="GO:0009245">
    <property type="term" value="P:lipid A biosynthetic process"/>
    <property type="evidence" value="ECO:0007669"/>
    <property type="project" value="TreeGrafter"/>
</dbReference>
<dbReference type="FunFam" id="1.10.1200.10:FF:000001">
    <property type="entry name" value="Acyl carrier protein"/>
    <property type="match status" value="1"/>
</dbReference>
<dbReference type="Gene3D" id="1.10.1200.10">
    <property type="entry name" value="ACP-like"/>
    <property type="match status" value="1"/>
</dbReference>
<dbReference type="HAMAP" id="MF_01217">
    <property type="entry name" value="Acyl_carrier"/>
    <property type="match status" value="1"/>
</dbReference>
<dbReference type="InterPro" id="IPR003231">
    <property type="entry name" value="ACP"/>
</dbReference>
<dbReference type="InterPro" id="IPR036736">
    <property type="entry name" value="ACP-like_sf"/>
</dbReference>
<dbReference type="InterPro" id="IPR009081">
    <property type="entry name" value="PP-bd_ACP"/>
</dbReference>
<dbReference type="InterPro" id="IPR006162">
    <property type="entry name" value="Ppantetheine_attach_site"/>
</dbReference>
<dbReference type="NCBIfam" id="TIGR00517">
    <property type="entry name" value="acyl_carrier"/>
    <property type="match status" value="1"/>
</dbReference>
<dbReference type="NCBIfam" id="NF002148">
    <property type="entry name" value="PRK00982.1-2"/>
    <property type="match status" value="1"/>
</dbReference>
<dbReference type="NCBIfam" id="NF002149">
    <property type="entry name" value="PRK00982.1-3"/>
    <property type="match status" value="1"/>
</dbReference>
<dbReference type="NCBIfam" id="NF002150">
    <property type="entry name" value="PRK00982.1-4"/>
    <property type="match status" value="1"/>
</dbReference>
<dbReference type="NCBIfam" id="NF002151">
    <property type="entry name" value="PRK00982.1-5"/>
    <property type="match status" value="1"/>
</dbReference>
<dbReference type="PANTHER" id="PTHR20863">
    <property type="entry name" value="ACYL CARRIER PROTEIN"/>
    <property type="match status" value="1"/>
</dbReference>
<dbReference type="PANTHER" id="PTHR20863:SF76">
    <property type="entry name" value="CARRIER DOMAIN-CONTAINING PROTEIN"/>
    <property type="match status" value="1"/>
</dbReference>
<dbReference type="Pfam" id="PF00550">
    <property type="entry name" value="PP-binding"/>
    <property type="match status" value="1"/>
</dbReference>
<dbReference type="SUPFAM" id="SSF47336">
    <property type="entry name" value="ACP-like"/>
    <property type="match status" value="1"/>
</dbReference>
<dbReference type="PROSITE" id="PS50075">
    <property type="entry name" value="CARRIER"/>
    <property type="match status" value="1"/>
</dbReference>
<dbReference type="PROSITE" id="PS00012">
    <property type="entry name" value="PHOSPHOPANTETHEINE"/>
    <property type="match status" value="1"/>
</dbReference>
<keyword id="KW-0963">Cytoplasm</keyword>
<keyword id="KW-0275">Fatty acid biosynthesis</keyword>
<keyword id="KW-0276">Fatty acid metabolism</keyword>
<keyword id="KW-0444">Lipid biosynthesis</keyword>
<keyword id="KW-0443">Lipid metabolism</keyword>
<keyword id="KW-0596">Phosphopantetheine</keyword>
<keyword id="KW-0597">Phosphoprotein</keyword>
<keyword id="KW-1185">Reference proteome</keyword>
<accession>Q9R6Z3</accession>
<organism>
    <name type="scientific">Photobacterium profundum (strain SS9)</name>
    <dbReference type="NCBI Taxonomy" id="298386"/>
    <lineage>
        <taxon>Bacteria</taxon>
        <taxon>Pseudomonadati</taxon>
        <taxon>Pseudomonadota</taxon>
        <taxon>Gammaproteobacteria</taxon>
        <taxon>Vibrionales</taxon>
        <taxon>Vibrionaceae</taxon>
        <taxon>Photobacterium</taxon>
    </lineage>
</organism>
<evidence type="ECO:0000255" key="1">
    <source>
        <dbReference type="HAMAP-Rule" id="MF_01217"/>
    </source>
</evidence>
<evidence type="ECO:0000255" key="2">
    <source>
        <dbReference type="PROSITE-ProRule" id="PRU00258"/>
    </source>
</evidence>